<sequence>MTNIRKSHPLMKIINSSFIDLPAPSNISSWWNFGSLLGICLALQILTGLFLAMHYTSDTATAFNSVTHICRDVNYGWILRYLHANGASMFFICLYLHVGRGLYYGSYMYTETWNIGIILLFAVMATAFMGYVLPWGQMSFWGATVITNLLSAIPYIGTNLVEWIWGGFSVDKATLTRFFAFHFLLPFIISAMVMVHLLFLHETGSNNPTGIPSNMDMIPFHPYYTIKDILGLLLMITVLLALVLFSPDMLGDPDNYMPANPLNTPPHIKPEWYFLFAYAILRSIPNKLGGVLALVLSILILAAIPLLHTSKQRSMSFRPLSQCLFWLLVADLLILTWIGGQPVEHPYVIIGQLASILYFSTIIILMPLTSLLENHLLKW</sequence>
<gene>
    <name type="primary">MT-CYB</name>
    <name type="synonym">COB</name>
    <name type="synonym">CYTB</name>
    <name type="synonym">MTCYB</name>
</gene>
<feature type="chain" id="PRO_0000254728" description="Cytochrome b">
    <location>
        <begin position="1"/>
        <end position="379"/>
    </location>
</feature>
<feature type="transmembrane region" description="Helical" evidence="2">
    <location>
        <begin position="33"/>
        <end position="53"/>
    </location>
</feature>
<feature type="transmembrane region" description="Helical" evidence="2">
    <location>
        <begin position="77"/>
        <end position="98"/>
    </location>
</feature>
<feature type="transmembrane region" description="Helical" evidence="2">
    <location>
        <begin position="113"/>
        <end position="133"/>
    </location>
</feature>
<feature type="transmembrane region" description="Helical" evidence="2">
    <location>
        <begin position="178"/>
        <end position="198"/>
    </location>
</feature>
<feature type="transmembrane region" description="Helical" evidence="2">
    <location>
        <begin position="226"/>
        <end position="246"/>
    </location>
</feature>
<feature type="transmembrane region" description="Helical" evidence="2">
    <location>
        <begin position="288"/>
        <end position="308"/>
    </location>
</feature>
<feature type="transmembrane region" description="Helical" evidence="2">
    <location>
        <begin position="320"/>
        <end position="340"/>
    </location>
</feature>
<feature type="transmembrane region" description="Helical" evidence="2">
    <location>
        <begin position="347"/>
        <end position="367"/>
    </location>
</feature>
<feature type="binding site" description="axial binding residue" evidence="2">
    <location>
        <position position="83"/>
    </location>
    <ligand>
        <name>heme b</name>
        <dbReference type="ChEBI" id="CHEBI:60344"/>
        <label>b562</label>
    </ligand>
    <ligandPart>
        <name>Fe</name>
        <dbReference type="ChEBI" id="CHEBI:18248"/>
    </ligandPart>
</feature>
<feature type="binding site" description="axial binding residue" evidence="2">
    <location>
        <position position="97"/>
    </location>
    <ligand>
        <name>heme b</name>
        <dbReference type="ChEBI" id="CHEBI:60344"/>
        <label>b566</label>
    </ligand>
    <ligandPart>
        <name>Fe</name>
        <dbReference type="ChEBI" id="CHEBI:18248"/>
    </ligandPart>
</feature>
<feature type="binding site" description="axial binding residue" evidence="2">
    <location>
        <position position="182"/>
    </location>
    <ligand>
        <name>heme b</name>
        <dbReference type="ChEBI" id="CHEBI:60344"/>
        <label>b562</label>
    </ligand>
    <ligandPart>
        <name>Fe</name>
        <dbReference type="ChEBI" id="CHEBI:18248"/>
    </ligandPart>
</feature>
<feature type="binding site" description="axial binding residue" evidence="2">
    <location>
        <position position="196"/>
    </location>
    <ligand>
        <name>heme b</name>
        <dbReference type="ChEBI" id="CHEBI:60344"/>
        <label>b566</label>
    </ligand>
    <ligandPart>
        <name>Fe</name>
        <dbReference type="ChEBI" id="CHEBI:18248"/>
    </ligandPart>
</feature>
<feature type="binding site" evidence="2">
    <location>
        <position position="201"/>
    </location>
    <ligand>
        <name>a ubiquinone</name>
        <dbReference type="ChEBI" id="CHEBI:16389"/>
    </ligand>
</feature>
<feature type="sequence variant" description="In strain: Isolate CMF 960522.46.">
    <original>I</original>
    <variation>V</variation>
    <location>
        <position position="39"/>
    </location>
</feature>
<feature type="sequence variant" description="In strain: Isolate CMF 960522.46.">
    <original>M</original>
    <variation>T</variation>
    <location>
        <position position="257"/>
    </location>
</feature>
<feature type="sequence variant" description="In strain: Isolate CMF 960522.46 and Isolate FMNH EAR1223.">
    <original>S</original>
    <variation>T</variation>
    <location>
        <position position="316"/>
    </location>
</feature>
<feature type="sequence variant" description="In strain: Isolate FMNH EAR1223.">
    <original>V</original>
    <variation>M</variation>
    <location>
        <position position="348"/>
    </location>
</feature>
<feature type="sequence variant" description="In strain: Isolate CMF 960522.46.">
    <original>I</original>
    <variation>T</variation>
    <location>
        <position position="356"/>
    </location>
</feature>
<keyword id="KW-0249">Electron transport</keyword>
<keyword id="KW-0349">Heme</keyword>
<keyword id="KW-0408">Iron</keyword>
<keyword id="KW-0472">Membrane</keyword>
<keyword id="KW-0479">Metal-binding</keyword>
<keyword id="KW-0496">Mitochondrion</keyword>
<keyword id="KW-0999">Mitochondrion inner membrane</keyword>
<keyword id="KW-0679">Respiratory chain</keyword>
<keyword id="KW-0812">Transmembrane</keyword>
<keyword id="KW-1133">Transmembrane helix</keyword>
<keyword id="KW-0813">Transport</keyword>
<keyword id="KW-0830">Ubiquinone</keyword>
<organism>
    <name type="scientific">Myotis macrotarsus</name>
    <name type="common">Philippine large-footed myotis</name>
    <dbReference type="NCBI Taxonomy" id="159328"/>
    <lineage>
        <taxon>Eukaryota</taxon>
        <taxon>Metazoa</taxon>
        <taxon>Chordata</taxon>
        <taxon>Craniata</taxon>
        <taxon>Vertebrata</taxon>
        <taxon>Euteleostomi</taxon>
        <taxon>Mammalia</taxon>
        <taxon>Eutheria</taxon>
        <taxon>Laurasiatheria</taxon>
        <taxon>Chiroptera</taxon>
        <taxon>Yangochiroptera</taxon>
        <taxon>Vespertilionidae</taxon>
        <taxon>Myotis</taxon>
    </lineage>
</organism>
<comment type="function">
    <text evidence="2">Component of the ubiquinol-cytochrome c reductase complex (complex III or cytochrome b-c1 complex) that is part of the mitochondrial respiratory chain. The b-c1 complex mediates electron transfer from ubiquinol to cytochrome c. Contributes to the generation of a proton gradient across the mitochondrial membrane that is then used for ATP synthesis.</text>
</comment>
<comment type="cofactor">
    <cofactor evidence="2">
        <name>heme b</name>
        <dbReference type="ChEBI" id="CHEBI:60344"/>
    </cofactor>
    <text evidence="2">Binds 2 heme b groups non-covalently.</text>
</comment>
<comment type="subunit">
    <text evidence="2">The cytochrome bc1 complex contains 11 subunits: 3 respiratory subunits (MT-CYB, CYC1 and UQCRFS1), 2 core proteins (UQCRC1 and UQCRC2) and 6 low-molecular weight proteins (UQCRH/QCR6, UQCRB/QCR7, UQCRQ/QCR8, UQCR10/QCR9, UQCR11/QCR10 and a cleavage product of UQCRFS1). This cytochrome bc1 complex then forms a dimer.</text>
</comment>
<comment type="subcellular location">
    <subcellularLocation>
        <location evidence="2">Mitochondrion inner membrane</location>
        <topology evidence="2">Multi-pass membrane protein</topology>
    </subcellularLocation>
</comment>
<comment type="miscellaneous">
    <text evidence="1">Heme 1 (or BL or b562) is low-potential and absorbs at about 562 nm, and heme 2 (or BH or b566) is high-potential and absorbs at about 566 nm.</text>
</comment>
<comment type="similarity">
    <text evidence="3 4">Belongs to the cytochrome b family.</text>
</comment>
<comment type="caution">
    <text evidence="2">The full-length protein contains only eight transmembrane helices, not nine as predicted by bioinformatics tools.</text>
</comment>
<protein>
    <recommendedName>
        <fullName>Cytochrome b</fullName>
    </recommendedName>
    <alternativeName>
        <fullName>Complex III subunit 3</fullName>
    </alternativeName>
    <alternativeName>
        <fullName>Complex III subunit III</fullName>
    </alternativeName>
    <alternativeName>
        <fullName>Cytochrome b-c1 complex subunit 3</fullName>
    </alternativeName>
    <alternativeName>
        <fullName>Ubiquinol-cytochrome-c reductase complex cytochrome b subunit</fullName>
    </alternativeName>
</protein>
<dbReference type="EMBL" id="AF376855">
    <property type="protein sequence ID" value="AAK57674.1"/>
    <property type="molecule type" value="Genomic_DNA"/>
</dbReference>
<dbReference type="EMBL" id="AF376856">
    <property type="protein sequence ID" value="AAK57675.1"/>
    <property type="molecule type" value="Genomic_DNA"/>
</dbReference>
<dbReference type="EMBL" id="AJ841960">
    <property type="protein sequence ID" value="CAH56553.1"/>
    <property type="molecule type" value="Genomic_DNA"/>
</dbReference>
<dbReference type="SMR" id="Q957A7"/>
<dbReference type="GO" id="GO:0005743">
    <property type="term" value="C:mitochondrial inner membrane"/>
    <property type="evidence" value="ECO:0007669"/>
    <property type="project" value="UniProtKB-SubCell"/>
</dbReference>
<dbReference type="GO" id="GO:0045275">
    <property type="term" value="C:respiratory chain complex III"/>
    <property type="evidence" value="ECO:0007669"/>
    <property type="project" value="InterPro"/>
</dbReference>
<dbReference type="GO" id="GO:0046872">
    <property type="term" value="F:metal ion binding"/>
    <property type="evidence" value="ECO:0007669"/>
    <property type="project" value="UniProtKB-KW"/>
</dbReference>
<dbReference type="GO" id="GO:0008121">
    <property type="term" value="F:ubiquinol-cytochrome-c reductase activity"/>
    <property type="evidence" value="ECO:0007669"/>
    <property type="project" value="InterPro"/>
</dbReference>
<dbReference type="GO" id="GO:0006122">
    <property type="term" value="P:mitochondrial electron transport, ubiquinol to cytochrome c"/>
    <property type="evidence" value="ECO:0007669"/>
    <property type="project" value="TreeGrafter"/>
</dbReference>
<dbReference type="CDD" id="cd00290">
    <property type="entry name" value="cytochrome_b_C"/>
    <property type="match status" value="1"/>
</dbReference>
<dbReference type="CDD" id="cd00284">
    <property type="entry name" value="Cytochrome_b_N"/>
    <property type="match status" value="1"/>
</dbReference>
<dbReference type="FunFam" id="1.20.810.10:FF:000002">
    <property type="entry name" value="Cytochrome b"/>
    <property type="match status" value="1"/>
</dbReference>
<dbReference type="Gene3D" id="1.20.810.10">
    <property type="entry name" value="Cytochrome Bc1 Complex, Chain C"/>
    <property type="match status" value="1"/>
</dbReference>
<dbReference type="InterPro" id="IPR005798">
    <property type="entry name" value="Cyt_b/b6_C"/>
</dbReference>
<dbReference type="InterPro" id="IPR036150">
    <property type="entry name" value="Cyt_b/b6_C_sf"/>
</dbReference>
<dbReference type="InterPro" id="IPR005797">
    <property type="entry name" value="Cyt_b/b6_N"/>
</dbReference>
<dbReference type="InterPro" id="IPR027387">
    <property type="entry name" value="Cytb/b6-like_sf"/>
</dbReference>
<dbReference type="InterPro" id="IPR030689">
    <property type="entry name" value="Cytochrome_b"/>
</dbReference>
<dbReference type="InterPro" id="IPR048260">
    <property type="entry name" value="Cytochrome_b_C_euk/bac"/>
</dbReference>
<dbReference type="InterPro" id="IPR048259">
    <property type="entry name" value="Cytochrome_b_N_euk/bac"/>
</dbReference>
<dbReference type="InterPro" id="IPR016174">
    <property type="entry name" value="Di-haem_cyt_TM"/>
</dbReference>
<dbReference type="PANTHER" id="PTHR19271">
    <property type="entry name" value="CYTOCHROME B"/>
    <property type="match status" value="1"/>
</dbReference>
<dbReference type="PANTHER" id="PTHR19271:SF16">
    <property type="entry name" value="CYTOCHROME B"/>
    <property type="match status" value="1"/>
</dbReference>
<dbReference type="Pfam" id="PF00032">
    <property type="entry name" value="Cytochrom_B_C"/>
    <property type="match status" value="1"/>
</dbReference>
<dbReference type="Pfam" id="PF00033">
    <property type="entry name" value="Cytochrome_B"/>
    <property type="match status" value="1"/>
</dbReference>
<dbReference type="PIRSF" id="PIRSF038885">
    <property type="entry name" value="COB"/>
    <property type="match status" value="1"/>
</dbReference>
<dbReference type="SUPFAM" id="SSF81648">
    <property type="entry name" value="a domain/subunit of cytochrome bc1 complex (Ubiquinol-cytochrome c reductase)"/>
    <property type="match status" value="1"/>
</dbReference>
<dbReference type="SUPFAM" id="SSF81342">
    <property type="entry name" value="Transmembrane di-heme cytochromes"/>
    <property type="match status" value="1"/>
</dbReference>
<dbReference type="PROSITE" id="PS51003">
    <property type="entry name" value="CYTB_CTER"/>
    <property type="match status" value="1"/>
</dbReference>
<dbReference type="PROSITE" id="PS51002">
    <property type="entry name" value="CYTB_NTER"/>
    <property type="match status" value="1"/>
</dbReference>
<evidence type="ECO:0000250" key="1"/>
<evidence type="ECO:0000250" key="2">
    <source>
        <dbReference type="UniProtKB" id="P00157"/>
    </source>
</evidence>
<evidence type="ECO:0000255" key="3">
    <source>
        <dbReference type="PROSITE-ProRule" id="PRU00967"/>
    </source>
</evidence>
<evidence type="ECO:0000255" key="4">
    <source>
        <dbReference type="PROSITE-ProRule" id="PRU00968"/>
    </source>
</evidence>
<geneLocation type="mitochondrion"/>
<proteinExistence type="inferred from homology"/>
<name>CYB_MYOMA</name>
<reference key="1">
    <citation type="journal article" date="2001" name="Mol. Phylogenet. Evol.">
        <title>Molecular systematics of bats of the genus Myotis (Vespertilionidae) suggests deterministic ecomorphological convergences.</title>
        <authorList>
            <person name="Ruedi M."/>
            <person name="Mayer F."/>
        </authorList>
    </citation>
    <scope>NUCLEOTIDE SEQUENCE [GENOMIC DNA]</scope>
    <source>
        <strain>Isolate FMNH EAR1222</strain>
        <strain>Isolate FMNH EAR1223</strain>
    </source>
</reference>
<reference key="2">
    <citation type="journal article" date="2004" name="Acta Chiropt.">
        <title>Phylogeny of African myotis bats (Chiroptera, Vespertilionidae) inferred from cytochrome b sequences.</title>
        <authorList>
            <person name="Stadelmann B."/>
            <person name="Jacobs D.S."/>
            <person name="Schoeman C."/>
            <person name="Ruedi M."/>
        </authorList>
    </citation>
    <scope>NUCLEOTIDE SEQUENCE [GENOMIC DNA]</scope>
    <source>
        <strain>Isolate CMF 960522.46</strain>
        <tissue>Wing</tissue>
    </source>
</reference>
<accession>Q957A7</accession>
<accession>Q5F4F8</accession>
<accession>Q957A6</accession>